<comment type="function">
    <text evidence="7">Probable chromatin remodeling factor.</text>
</comment>
<comment type="subunit">
    <text evidence="6">Interacts with NRPD1.</text>
</comment>
<comment type="subcellular location">
    <subcellularLocation>
        <location evidence="1 4">Nucleus</location>
    </subcellularLocation>
</comment>
<comment type="similarity">
    <text evidence="8">Belongs to the SNF2/RAD54 helicase family.</text>
</comment>
<accession>Q9LK10</accession>
<protein>
    <recommendedName>
        <fullName>SNF2 domain-containing protein CLASSY 4</fullName>
        <ecNumber>3.6.4.-</ecNumber>
    </recommendedName>
    <alternativeName>
        <fullName evidence="7">Protein CHROMATIN REMODELING 40</fullName>
        <shortName>AtCHR40</shortName>
    </alternativeName>
</protein>
<name>CLSY4_ARATH</name>
<reference key="1">
    <citation type="journal article" date="2000" name="DNA Res.">
        <title>Structural analysis of Arabidopsis thaliana chromosome 3. II. Sequence features of the 4,251,695 bp regions covered by 90 P1, TAC and BAC clones.</title>
        <authorList>
            <person name="Kaneko T."/>
            <person name="Katoh T."/>
            <person name="Sato S."/>
            <person name="Nakamura Y."/>
            <person name="Asamizu E."/>
            <person name="Tabata S."/>
        </authorList>
    </citation>
    <scope>NUCLEOTIDE SEQUENCE [LARGE SCALE GENOMIC DNA]</scope>
    <source>
        <strain>cv. Columbia</strain>
    </source>
</reference>
<reference key="2">
    <citation type="journal article" date="2017" name="Plant J.">
        <title>Araport11: a complete reannotation of the Arabidopsis thaliana reference genome.</title>
        <authorList>
            <person name="Cheng C.Y."/>
            <person name="Krishnakumar V."/>
            <person name="Chan A.P."/>
            <person name="Thibaud-Nissen F."/>
            <person name="Schobel S."/>
            <person name="Town C.D."/>
        </authorList>
    </citation>
    <scope>GENOME REANNOTATION</scope>
    <source>
        <strain>cv. Columbia</strain>
    </source>
</reference>
<reference key="3">
    <citation type="journal article" date="2006" name="Genetics">
        <title>Involvement of the Arabidopsis SWI2/SNF2 chromatin remodeling gene family in DNA damage response and recombination.</title>
        <authorList>
            <person name="Shaked H."/>
            <person name="Avivi-Ragolsky N."/>
            <person name="Levy A.A."/>
        </authorList>
    </citation>
    <scope>GENE FAMILY</scope>
    <scope>NOMENCLATURE</scope>
</reference>
<reference key="4">
    <citation type="journal article" date="2007" name="Plant Cell">
        <title>An SNF2 protein associated with nuclear RNA silencing and the spread of a silencing signal between cells in Arabidopsis.</title>
        <authorList>
            <person name="Smith L.M."/>
            <person name="Pontes O."/>
            <person name="Searle I."/>
            <person name="Yelina N."/>
            <person name="Yousafzai F.K."/>
            <person name="Herr A.J."/>
            <person name="Pikaard C.S."/>
            <person name="Baulcombe D.C."/>
        </authorList>
    </citation>
    <scope>IDENTIFICATION</scope>
    <scope>GENE FAMILY</scope>
</reference>
<reference key="5">
    <citation type="journal article" date="2011" name="PLoS Genet.">
        <title>SHH1, a homeodomain protein required for DNA methylation, as well as RDR2, RDM4, and chromatin remodeling factors, associate with RNA polymerase IV.</title>
        <authorList>
            <person name="Law J.A."/>
            <person name="Vashisht A.A."/>
            <person name="Wohlschlegel J.A."/>
            <person name="Jacobsen S.E."/>
        </authorList>
    </citation>
    <scope>IDENTIFICATION BY MASS SPECTROMETRY</scope>
    <scope>INTERACTION WITH NRPD1</scope>
    <scope>NOMENCLATURE</scope>
</reference>
<reference key="6">
    <citation type="journal article" date="2013" name="PLoS ONE">
        <title>Genome-wide comparative in silico analysis of the RNA helicase gene family in Zea mays and Glycine max: a comparison with Arabidopsis and Oryza sativa.</title>
        <authorList>
            <person name="Xu R."/>
            <person name="Zhang S."/>
            <person name="Huang J."/>
            <person name="Zheng C."/>
        </authorList>
    </citation>
    <scope>GENE FAMILY</scope>
</reference>
<gene>
    <name type="primary">CLSY4</name>
    <name evidence="7" type="synonym">CHR40</name>
    <name type="ordered locus">At3g24340</name>
    <name type="ORF">K7M2.11</name>
</gene>
<dbReference type="EC" id="3.6.4.-"/>
<dbReference type="EMBL" id="AP000382">
    <property type="protein sequence ID" value="BAB02934.1"/>
    <property type="molecule type" value="Genomic_DNA"/>
</dbReference>
<dbReference type="EMBL" id="CP002686">
    <property type="protein sequence ID" value="AEE76891.1"/>
    <property type="molecule type" value="Genomic_DNA"/>
</dbReference>
<dbReference type="RefSeq" id="NP_189077.1">
    <property type="nucleotide sequence ID" value="NM_113341.2"/>
</dbReference>
<dbReference type="SMR" id="Q9LK10"/>
<dbReference type="BioGRID" id="7355">
    <property type="interactions" value="1"/>
</dbReference>
<dbReference type="STRING" id="3702.Q9LK10"/>
<dbReference type="PaxDb" id="3702-AT3G24340.1"/>
<dbReference type="ProteomicsDB" id="240983"/>
<dbReference type="EnsemblPlants" id="AT3G24340.1">
    <property type="protein sequence ID" value="AT3G24340.1"/>
    <property type="gene ID" value="AT3G24340"/>
</dbReference>
<dbReference type="GeneID" id="822023"/>
<dbReference type="Gramene" id="AT3G24340.1">
    <property type="protein sequence ID" value="AT3G24340.1"/>
    <property type="gene ID" value="AT3G24340"/>
</dbReference>
<dbReference type="KEGG" id="ath:AT3G24340"/>
<dbReference type="Araport" id="AT3G24340"/>
<dbReference type="TAIR" id="AT3G24340">
    <property type="gene designation" value="CHR40"/>
</dbReference>
<dbReference type="eggNOG" id="KOG0390">
    <property type="taxonomic scope" value="Eukaryota"/>
</dbReference>
<dbReference type="HOGENOM" id="CLU_302146_0_0_1"/>
<dbReference type="InParanoid" id="Q9LK10"/>
<dbReference type="OMA" id="QQETCEN"/>
<dbReference type="OrthoDB" id="2020972at2759"/>
<dbReference type="PhylomeDB" id="Q9LK10"/>
<dbReference type="PRO" id="PR:Q9LK10"/>
<dbReference type="Proteomes" id="UP000006548">
    <property type="component" value="Chromosome 3"/>
</dbReference>
<dbReference type="ExpressionAtlas" id="Q9LK10">
    <property type="expression patterns" value="baseline and differential"/>
</dbReference>
<dbReference type="GO" id="GO:0005634">
    <property type="term" value="C:nucleus"/>
    <property type="evidence" value="ECO:0007669"/>
    <property type="project" value="UniProtKB-SubCell"/>
</dbReference>
<dbReference type="GO" id="GO:0005524">
    <property type="term" value="F:ATP binding"/>
    <property type="evidence" value="ECO:0007669"/>
    <property type="project" value="UniProtKB-KW"/>
</dbReference>
<dbReference type="GO" id="GO:0003677">
    <property type="term" value="F:DNA binding"/>
    <property type="evidence" value="ECO:0007669"/>
    <property type="project" value="UniProtKB-KW"/>
</dbReference>
<dbReference type="GO" id="GO:0004386">
    <property type="term" value="F:helicase activity"/>
    <property type="evidence" value="ECO:0007669"/>
    <property type="project" value="UniProtKB-KW"/>
</dbReference>
<dbReference type="GO" id="GO:0016787">
    <property type="term" value="F:hydrolase activity"/>
    <property type="evidence" value="ECO:0007669"/>
    <property type="project" value="UniProtKB-KW"/>
</dbReference>
<dbReference type="GO" id="GO:0080188">
    <property type="term" value="P:gene silencing by siRNA-directed DNA methylation"/>
    <property type="evidence" value="ECO:0007669"/>
    <property type="project" value="InterPro"/>
</dbReference>
<dbReference type="GO" id="GO:1900370">
    <property type="term" value="P:positive regulation of post-transcriptional gene silencing by RNA"/>
    <property type="evidence" value="ECO:0000315"/>
    <property type="project" value="TAIR"/>
</dbReference>
<dbReference type="CDD" id="cd18007">
    <property type="entry name" value="DEXHc_ATRX-like"/>
    <property type="match status" value="1"/>
</dbReference>
<dbReference type="CDD" id="cd18793">
    <property type="entry name" value="SF2_C_SNF"/>
    <property type="match status" value="1"/>
</dbReference>
<dbReference type="FunFam" id="3.40.50.300:FF:002151">
    <property type="entry name" value="SNF2 domain-containing protein CLASSY 3"/>
    <property type="match status" value="1"/>
</dbReference>
<dbReference type="Gene3D" id="3.40.50.300">
    <property type="entry name" value="P-loop containing nucleotide triphosphate hydrolases"/>
    <property type="match status" value="1"/>
</dbReference>
<dbReference type="Gene3D" id="3.40.50.10810">
    <property type="entry name" value="Tandem AAA-ATPase domain"/>
    <property type="match status" value="1"/>
</dbReference>
<dbReference type="InterPro" id="IPR044567">
    <property type="entry name" value="CLSY/DRD1"/>
</dbReference>
<dbReference type="InterPro" id="IPR014001">
    <property type="entry name" value="Helicase_ATP-bd"/>
</dbReference>
<dbReference type="InterPro" id="IPR001650">
    <property type="entry name" value="Helicase_C-like"/>
</dbReference>
<dbReference type="InterPro" id="IPR027417">
    <property type="entry name" value="P-loop_NTPase"/>
</dbReference>
<dbReference type="InterPro" id="IPR038718">
    <property type="entry name" value="SNF2-like_sf"/>
</dbReference>
<dbReference type="InterPro" id="IPR049730">
    <property type="entry name" value="SNF2/RAD54-like_C"/>
</dbReference>
<dbReference type="InterPro" id="IPR000330">
    <property type="entry name" value="SNF2_N"/>
</dbReference>
<dbReference type="PANTHER" id="PTHR45821">
    <property type="entry name" value="SNF2 DOMAIN-CONTAINING PROTEIN CLASSY 2-RELATED"/>
    <property type="match status" value="1"/>
</dbReference>
<dbReference type="PANTHER" id="PTHR45821:SF5">
    <property type="entry name" value="SNF2 DOMAIN-CONTAINING PROTEIN CLASSY 4"/>
    <property type="match status" value="1"/>
</dbReference>
<dbReference type="Pfam" id="PF00271">
    <property type="entry name" value="Helicase_C"/>
    <property type="match status" value="1"/>
</dbReference>
<dbReference type="Pfam" id="PF00176">
    <property type="entry name" value="SNF2-rel_dom"/>
    <property type="match status" value="1"/>
</dbReference>
<dbReference type="SMART" id="SM00487">
    <property type="entry name" value="DEXDc"/>
    <property type="match status" value="1"/>
</dbReference>
<dbReference type="SMART" id="SM00490">
    <property type="entry name" value="HELICc"/>
    <property type="match status" value="1"/>
</dbReference>
<dbReference type="SUPFAM" id="SSF52540">
    <property type="entry name" value="P-loop containing nucleoside triphosphate hydrolases"/>
    <property type="match status" value="2"/>
</dbReference>
<dbReference type="PROSITE" id="PS51192">
    <property type="entry name" value="HELICASE_ATP_BIND_1"/>
    <property type="match status" value="1"/>
</dbReference>
<dbReference type="PROSITE" id="PS51194">
    <property type="entry name" value="HELICASE_CTER"/>
    <property type="match status" value="1"/>
</dbReference>
<sequence length="1132" mass="128343">MDMTSCVARRTRSRTESYLNSILNKSKGISGEEEDQSLGCVNSRTEKRRVNMRDACSPSPRKKKRRRRKDDDDDVVFVRTEYPEGKRDDENVGSTSGNLQSKSFDFGDRVCDFDADDRNLGCEEKASNFNPIDDDDDVVFVGTVQRENDHVEDDDNVGSASVISPRVCDFDEDDAKVSGKENPLSPDDDDDVVFLGTIAGENQHVEDVNAGSEVCDILLDDANLRGEEKTYVSDEVVSLSSSSDDEEDPLEELGTDSREEVSGEDRDSGESDMDEDANDSDSSDYVGESSDSSDVESSDSDFVCSEDEEGGTRDDATCEKNPSEKVYHHKKSRTFRRKHNFDVINLLAKSMLESKDVFKEDIFSWDKIAEVDSREDPVVRESSSEKVNEHGKPRERRSFHRVREKNHLNGESFYGGEKLCDGEETINYSTEDSPPLNLRFGCEEPVLIEKTEEEKELDSLWEDMNVALTLEGMHSSTPDKNGDMLCSKGTHDFVLDDEIGLKCVHCAYVAVEIKDISPAMDKYRPSVNDNKKCSDRKGDPLPNRLEFDASDPSSFVAPLDNIEGTVWQYVPGIKDTLYPHQQEGFEFIWKNLAGTTKINELNSVGVKGSGGCIISHKAGTGKTRLTVVFLQSYLKRFPNSHPMVIAPATLMRTWEDEVRKWNVNIPFYNMNSLQLSGYEDAEAVSRLEGNRHHNSIRMVKLVSWWKQKSILGISYPLYEKLAANKNTEGMQVFRRMLVELPGLLVLDEGHTPRNQSSLIWKVLTEVRTEKRIFLSGTLFQNNFKELSNVLCLARPADKDTISSRIHELSKCSQEGEHGRVNEENRIVDLKAMIAHFVHVHEGTILQESLPGLRDCVVVLNPPFQQKKILDRIDTSQNTFEFEHKLSAVSVHPSLYLCCNPTKKEDLVIGPATLGTLKRLRLKYEEGVKTKFLIDFIRISGTVKEKVLVYSQYIDTLKLIMEQLIAECDWTEGEQILLMHGKVEQRDRQHMIDNFNKPDSGSKVLLASTKACSEGISLVGASRVVILDVVWNPSVESQAISRAFRIGQKRAVFIYHLMVKDTSEWNKYCKQSEKHRISELVFSSTNEKDKPINNEVVSKDRILDEMVRHEKLKHIFEKILYHPKKSDMNTSFF</sequence>
<proteinExistence type="evidence at protein level"/>
<keyword id="KW-0067">ATP-binding</keyword>
<keyword id="KW-0238">DNA-binding</keyword>
<keyword id="KW-0347">Helicase</keyword>
<keyword id="KW-0378">Hydrolase</keyword>
<keyword id="KW-0547">Nucleotide-binding</keyword>
<keyword id="KW-0539">Nucleus</keyword>
<keyword id="KW-1185">Reference proteome</keyword>
<evidence type="ECO:0000250" key="1"/>
<evidence type="ECO:0000255" key="2">
    <source>
        <dbReference type="PROSITE-ProRule" id="PRU00541"/>
    </source>
</evidence>
<evidence type="ECO:0000255" key="3">
    <source>
        <dbReference type="PROSITE-ProRule" id="PRU00542"/>
    </source>
</evidence>
<evidence type="ECO:0000255" key="4">
    <source>
        <dbReference type="PROSITE-ProRule" id="PRU00768"/>
    </source>
</evidence>
<evidence type="ECO:0000256" key="5">
    <source>
        <dbReference type="SAM" id="MobiDB-lite"/>
    </source>
</evidence>
<evidence type="ECO:0000269" key="6">
    <source>
    </source>
</evidence>
<evidence type="ECO:0000303" key="7">
    <source>
    </source>
</evidence>
<evidence type="ECO:0000305" key="8"/>
<organism>
    <name type="scientific">Arabidopsis thaliana</name>
    <name type="common">Mouse-ear cress</name>
    <dbReference type="NCBI Taxonomy" id="3702"/>
    <lineage>
        <taxon>Eukaryota</taxon>
        <taxon>Viridiplantae</taxon>
        <taxon>Streptophyta</taxon>
        <taxon>Embryophyta</taxon>
        <taxon>Tracheophyta</taxon>
        <taxon>Spermatophyta</taxon>
        <taxon>Magnoliopsida</taxon>
        <taxon>eudicotyledons</taxon>
        <taxon>Gunneridae</taxon>
        <taxon>Pentapetalae</taxon>
        <taxon>rosids</taxon>
        <taxon>malvids</taxon>
        <taxon>Brassicales</taxon>
        <taxon>Brassicaceae</taxon>
        <taxon>Camelineae</taxon>
        <taxon>Arabidopsis</taxon>
    </lineage>
</organism>
<feature type="chain" id="PRO_0000423316" description="SNF2 domain-containing protein CLASSY 4">
    <location>
        <begin position="1"/>
        <end position="1132"/>
    </location>
</feature>
<feature type="domain" description="Helicase ATP-binding" evidence="2">
    <location>
        <begin position="603"/>
        <end position="796"/>
    </location>
</feature>
<feature type="domain" description="Helicase C-terminal" evidence="3">
    <location>
        <begin position="934"/>
        <end position="1087"/>
    </location>
</feature>
<feature type="region of interest" description="Disordered" evidence="5">
    <location>
        <begin position="24"/>
        <end position="104"/>
    </location>
</feature>
<feature type="region of interest" description="Disordered" evidence="5">
    <location>
        <begin position="224"/>
        <end position="331"/>
    </location>
</feature>
<feature type="region of interest" description="Disordered" evidence="5">
    <location>
        <begin position="376"/>
        <end position="396"/>
    </location>
</feature>
<feature type="region of interest" description="Disordered" evidence="5">
    <location>
        <begin position="525"/>
        <end position="544"/>
    </location>
</feature>
<feature type="short sequence motif" description="Nuclear localization signal" evidence="4">
    <location>
        <begin position="47"/>
        <end position="54"/>
    </location>
</feature>
<feature type="short sequence motif" description="DEAH box" evidence="2">
    <location>
        <begin position="747"/>
        <end position="750"/>
    </location>
</feature>
<feature type="compositionally biased region" description="Basic and acidic residues" evidence="5">
    <location>
        <begin position="81"/>
        <end position="90"/>
    </location>
</feature>
<feature type="compositionally biased region" description="Polar residues" evidence="5">
    <location>
        <begin position="92"/>
        <end position="103"/>
    </location>
</feature>
<feature type="compositionally biased region" description="Low complexity" evidence="5">
    <location>
        <begin position="233"/>
        <end position="242"/>
    </location>
</feature>
<feature type="compositionally biased region" description="Acidic residues" evidence="5">
    <location>
        <begin position="243"/>
        <end position="254"/>
    </location>
</feature>
<feature type="compositionally biased region" description="Basic and acidic residues" evidence="5">
    <location>
        <begin position="255"/>
        <end position="269"/>
    </location>
</feature>
<feature type="compositionally biased region" description="Acidic residues" evidence="5">
    <location>
        <begin position="270"/>
        <end position="282"/>
    </location>
</feature>
<feature type="compositionally biased region" description="Acidic residues" evidence="5">
    <location>
        <begin position="291"/>
        <end position="309"/>
    </location>
</feature>
<feature type="compositionally biased region" description="Basic and acidic residues" evidence="5">
    <location>
        <begin position="310"/>
        <end position="326"/>
    </location>
</feature>
<feature type="compositionally biased region" description="Basic and acidic residues" evidence="5">
    <location>
        <begin position="376"/>
        <end position="392"/>
    </location>
</feature>
<feature type="compositionally biased region" description="Basic and acidic residues" evidence="5">
    <location>
        <begin position="525"/>
        <end position="539"/>
    </location>
</feature>
<feature type="binding site" evidence="2">
    <location>
        <begin position="616"/>
        <end position="623"/>
    </location>
    <ligand>
        <name>ATP</name>
        <dbReference type="ChEBI" id="CHEBI:30616"/>
    </ligand>
</feature>